<evidence type="ECO:0000255" key="1">
    <source>
        <dbReference type="HAMAP-Rule" id="MF_01396"/>
    </source>
</evidence>
<comment type="function">
    <text evidence="1">F(1)F(0) ATP synthase produces ATP from ADP in the presence of a proton or sodium gradient. F-type ATPases consist of two structural domains, F(1) containing the extramembraneous catalytic core and F(0) containing the membrane proton channel, linked together by a central stalk and a peripheral stalk. During catalysis, ATP synthesis in the catalytic domain of F(1) is coupled via a rotary mechanism of the central stalk subunits to proton translocation.</text>
</comment>
<comment type="function">
    <text evidence="1">Key component of the F(0) channel; it plays a direct role in translocation across the membrane. A homomeric c-ring of between 10-14 subunits forms the central stalk rotor element with the F(1) delta and epsilon subunits.</text>
</comment>
<comment type="subunit">
    <text evidence="1">F-type ATPases have 2 components, F(1) - the catalytic core - and F(0) - the membrane proton channel. F(1) has five subunits: alpha(3), beta(3), gamma(1), delta(1), epsilon(1). F(0) has four main subunits: a(1), b(1), b'(1) and c(10-14). The alpha and beta chains form an alternating ring which encloses part of the gamma chain. F(1) is attached to F(0) by a central stalk formed by the gamma and epsilon chains, while a peripheral stalk is formed by the delta, b and b' chains.</text>
</comment>
<comment type="subcellular location">
    <subcellularLocation>
        <location evidence="1">Cell inner membrane</location>
        <topology evidence="1">Multi-pass membrane protein</topology>
    </subcellularLocation>
</comment>
<comment type="similarity">
    <text evidence="1">Belongs to the ATPase C chain family.</text>
</comment>
<name>ATPL_RHORU</name>
<feature type="chain" id="PRO_0000112159" description="ATP synthase subunit c">
    <location>
        <begin position="1"/>
        <end position="75"/>
    </location>
</feature>
<feature type="transmembrane region" description="Helical" evidence="1">
    <location>
        <begin position="9"/>
        <end position="29"/>
    </location>
</feature>
<feature type="transmembrane region" description="Helical" evidence="1">
    <location>
        <begin position="52"/>
        <end position="72"/>
    </location>
</feature>
<feature type="site" description="Reversibly protonated during proton transport" evidence="1">
    <location>
        <position position="58"/>
    </location>
</feature>
<organism>
    <name type="scientific">Rhodospirillum rubrum</name>
    <dbReference type="NCBI Taxonomy" id="1085"/>
    <lineage>
        <taxon>Bacteria</taxon>
        <taxon>Pseudomonadati</taxon>
        <taxon>Pseudomonadota</taxon>
        <taxon>Alphaproteobacteria</taxon>
        <taxon>Rhodospirillales</taxon>
        <taxon>Rhodospirillaceae</taxon>
        <taxon>Rhodospirillum</taxon>
    </lineage>
</organism>
<gene>
    <name evidence="1" type="primary">atpE</name>
</gene>
<reference key="1">
    <citation type="journal article" date="1988" name="Biochem. J.">
        <title>DNA sequence of a gene cluster coding for subunits of the F0 membrane sector of ATP synthase in Rhodospirillum rubrum. Support for modular evolution of the F1 and F0 sectors.</title>
        <authorList>
            <person name="Falk G."/>
            <person name="Walker J.E."/>
        </authorList>
    </citation>
    <scope>NUCLEOTIDE SEQUENCE [GENOMIC DNA]</scope>
</reference>
<proteinExistence type="inferred from homology"/>
<sequence length="75" mass="7518">MDAEAAKMIGAGLAAIGMIGSGIGVGNIWANLIATVGRNPAAKSTVELYGWIGFAVTEAIALFALVVALILLFAA</sequence>
<protein>
    <recommendedName>
        <fullName evidence="1">ATP synthase subunit c</fullName>
    </recommendedName>
    <alternativeName>
        <fullName evidence="1">ATP synthase F(0) sector subunit c</fullName>
    </alternativeName>
    <alternativeName>
        <fullName evidence="1">F-type ATPase subunit c</fullName>
        <shortName evidence="1">F-ATPase subunit c</shortName>
    </alternativeName>
    <alternativeName>
        <fullName evidence="1">Lipid-binding protein</fullName>
    </alternativeName>
</protein>
<accession>P15014</accession>
<dbReference type="EMBL" id="M37308">
    <property type="protein sequence ID" value="AAA26456.1"/>
    <property type="molecule type" value="Genomic_DNA"/>
</dbReference>
<dbReference type="EMBL" id="X12757">
    <property type="protein sequence ID" value="CAA31247.1"/>
    <property type="molecule type" value="Genomic_DNA"/>
</dbReference>
<dbReference type="PIR" id="S01148">
    <property type="entry name" value="S01148"/>
</dbReference>
<dbReference type="RefSeq" id="WP_011390993.1">
    <property type="nucleotide sequence ID" value="NZ_DAMDTZ010000099.1"/>
</dbReference>
<dbReference type="SMR" id="P15014"/>
<dbReference type="OMA" id="YIFGKMI"/>
<dbReference type="GO" id="GO:0005886">
    <property type="term" value="C:plasma membrane"/>
    <property type="evidence" value="ECO:0007669"/>
    <property type="project" value="UniProtKB-SubCell"/>
</dbReference>
<dbReference type="GO" id="GO:0045259">
    <property type="term" value="C:proton-transporting ATP synthase complex"/>
    <property type="evidence" value="ECO:0007669"/>
    <property type="project" value="UniProtKB-KW"/>
</dbReference>
<dbReference type="GO" id="GO:0033177">
    <property type="term" value="C:proton-transporting two-sector ATPase complex, proton-transporting domain"/>
    <property type="evidence" value="ECO:0007669"/>
    <property type="project" value="InterPro"/>
</dbReference>
<dbReference type="GO" id="GO:0008289">
    <property type="term" value="F:lipid binding"/>
    <property type="evidence" value="ECO:0007669"/>
    <property type="project" value="UniProtKB-KW"/>
</dbReference>
<dbReference type="GO" id="GO:0046933">
    <property type="term" value="F:proton-transporting ATP synthase activity, rotational mechanism"/>
    <property type="evidence" value="ECO:0007669"/>
    <property type="project" value="UniProtKB-UniRule"/>
</dbReference>
<dbReference type="CDD" id="cd18182">
    <property type="entry name" value="ATP-synt_Fo_c_ATP5G3"/>
    <property type="match status" value="1"/>
</dbReference>
<dbReference type="Gene3D" id="1.20.20.10">
    <property type="entry name" value="F1F0 ATP synthase subunit C"/>
    <property type="match status" value="1"/>
</dbReference>
<dbReference type="HAMAP" id="MF_01396">
    <property type="entry name" value="ATP_synth_c_bact"/>
    <property type="match status" value="1"/>
</dbReference>
<dbReference type="InterPro" id="IPR000454">
    <property type="entry name" value="ATP_synth_F0_csu"/>
</dbReference>
<dbReference type="InterPro" id="IPR020537">
    <property type="entry name" value="ATP_synth_F0_csu_DDCD_BS"/>
</dbReference>
<dbReference type="InterPro" id="IPR038662">
    <property type="entry name" value="ATP_synth_F0_csu_sf"/>
</dbReference>
<dbReference type="InterPro" id="IPR002379">
    <property type="entry name" value="ATPase_proteolipid_c-like_dom"/>
</dbReference>
<dbReference type="InterPro" id="IPR035921">
    <property type="entry name" value="F/V-ATP_Csub_sf"/>
</dbReference>
<dbReference type="NCBIfam" id="NF005733">
    <property type="entry name" value="PRK07558.1"/>
    <property type="match status" value="1"/>
</dbReference>
<dbReference type="PANTHER" id="PTHR10031">
    <property type="entry name" value="ATP SYNTHASE LIPID-BINDING PROTEIN, MITOCHONDRIAL"/>
    <property type="match status" value="1"/>
</dbReference>
<dbReference type="PANTHER" id="PTHR10031:SF0">
    <property type="entry name" value="ATPASE PROTEIN 9"/>
    <property type="match status" value="1"/>
</dbReference>
<dbReference type="Pfam" id="PF00137">
    <property type="entry name" value="ATP-synt_C"/>
    <property type="match status" value="1"/>
</dbReference>
<dbReference type="PRINTS" id="PR00124">
    <property type="entry name" value="ATPASEC"/>
</dbReference>
<dbReference type="SUPFAM" id="SSF81333">
    <property type="entry name" value="F1F0 ATP synthase subunit C"/>
    <property type="match status" value="1"/>
</dbReference>
<dbReference type="PROSITE" id="PS00605">
    <property type="entry name" value="ATPASE_C"/>
    <property type="match status" value="1"/>
</dbReference>
<keyword id="KW-0066">ATP synthesis</keyword>
<keyword id="KW-0997">Cell inner membrane</keyword>
<keyword id="KW-1003">Cell membrane</keyword>
<keyword id="KW-0138">CF(0)</keyword>
<keyword id="KW-0375">Hydrogen ion transport</keyword>
<keyword id="KW-0406">Ion transport</keyword>
<keyword id="KW-0446">Lipid-binding</keyword>
<keyword id="KW-0472">Membrane</keyword>
<keyword id="KW-0812">Transmembrane</keyword>
<keyword id="KW-1133">Transmembrane helix</keyword>
<keyword id="KW-0813">Transport</keyword>